<reference key="1">
    <citation type="journal article" date="2000" name="Nature">
        <title>Sequence and analysis of chromosome 1 of the plant Arabidopsis thaliana.</title>
        <authorList>
            <person name="Theologis A."/>
            <person name="Ecker J.R."/>
            <person name="Palm C.J."/>
            <person name="Federspiel N.A."/>
            <person name="Kaul S."/>
            <person name="White O."/>
            <person name="Alonso J."/>
            <person name="Altafi H."/>
            <person name="Araujo R."/>
            <person name="Bowman C.L."/>
            <person name="Brooks S.Y."/>
            <person name="Buehler E."/>
            <person name="Chan A."/>
            <person name="Chao Q."/>
            <person name="Chen H."/>
            <person name="Cheuk R.F."/>
            <person name="Chin C.W."/>
            <person name="Chung M.K."/>
            <person name="Conn L."/>
            <person name="Conway A.B."/>
            <person name="Conway A.R."/>
            <person name="Creasy T.H."/>
            <person name="Dewar K."/>
            <person name="Dunn P."/>
            <person name="Etgu P."/>
            <person name="Feldblyum T.V."/>
            <person name="Feng J.-D."/>
            <person name="Fong B."/>
            <person name="Fujii C.Y."/>
            <person name="Gill J.E."/>
            <person name="Goldsmith A.D."/>
            <person name="Haas B."/>
            <person name="Hansen N.F."/>
            <person name="Hughes B."/>
            <person name="Huizar L."/>
            <person name="Hunter J.L."/>
            <person name="Jenkins J."/>
            <person name="Johnson-Hopson C."/>
            <person name="Khan S."/>
            <person name="Khaykin E."/>
            <person name="Kim C.J."/>
            <person name="Koo H.L."/>
            <person name="Kremenetskaia I."/>
            <person name="Kurtz D.B."/>
            <person name="Kwan A."/>
            <person name="Lam B."/>
            <person name="Langin-Hooper S."/>
            <person name="Lee A."/>
            <person name="Lee J.M."/>
            <person name="Lenz C.A."/>
            <person name="Li J.H."/>
            <person name="Li Y.-P."/>
            <person name="Lin X."/>
            <person name="Liu S.X."/>
            <person name="Liu Z.A."/>
            <person name="Luros J.S."/>
            <person name="Maiti R."/>
            <person name="Marziali A."/>
            <person name="Militscher J."/>
            <person name="Miranda M."/>
            <person name="Nguyen M."/>
            <person name="Nierman W.C."/>
            <person name="Osborne B.I."/>
            <person name="Pai G."/>
            <person name="Peterson J."/>
            <person name="Pham P.K."/>
            <person name="Rizzo M."/>
            <person name="Rooney T."/>
            <person name="Rowley D."/>
            <person name="Sakano H."/>
            <person name="Salzberg S.L."/>
            <person name="Schwartz J.R."/>
            <person name="Shinn P."/>
            <person name="Southwick A.M."/>
            <person name="Sun H."/>
            <person name="Tallon L.J."/>
            <person name="Tambunga G."/>
            <person name="Toriumi M.J."/>
            <person name="Town C.D."/>
            <person name="Utterback T."/>
            <person name="Van Aken S."/>
            <person name="Vaysberg M."/>
            <person name="Vysotskaia V.S."/>
            <person name="Walker M."/>
            <person name="Wu D."/>
            <person name="Yu G."/>
            <person name="Fraser C.M."/>
            <person name="Venter J.C."/>
            <person name="Davis R.W."/>
        </authorList>
    </citation>
    <scope>NUCLEOTIDE SEQUENCE [LARGE SCALE GENOMIC DNA]</scope>
    <source>
        <strain>cv. Columbia</strain>
    </source>
</reference>
<reference key="2">
    <citation type="journal article" date="2017" name="Plant J.">
        <title>Araport11: a complete reannotation of the Arabidopsis thaliana reference genome.</title>
        <authorList>
            <person name="Cheng C.Y."/>
            <person name="Krishnakumar V."/>
            <person name="Chan A.P."/>
            <person name="Thibaud-Nissen F."/>
            <person name="Schobel S."/>
            <person name="Town C.D."/>
        </authorList>
    </citation>
    <scope>GENOME REANNOTATION</scope>
    <source>
        <strain>cv. Columbia</strain>
    </source>
</reference>
<reference key="3">
    <citation type="journal article" date="2012" name="Curr. Biol.">
        <title>A superfamily of actin-binding proteins at the actin-membrane nexus of higher plants.</title>
        <authorList>
            <person name="Deeks M.J."/>
            <person name="Calcutt J.R."/>
            <person name="Ingle E.K."/>
            <person name="Hawkins T.J."/>
            <person name="Chapman S."/>
            <person name="Richardson A.C."/>
            <person name="Mentlak D.A."/>
            <person name="Dixon M.R."/>
            <person name="Cartwright F."/>
            <person name="Smertenko A.P."/>
            <person name="Oparka K."/>
            <person name="Hussey P.J."/>
        </authorList>
    </citation>
    <scope>GENE FAMILY</scope>
    <scope>NOMENCLATURE</scope>
</reference>
<reference key="4">
    <citation type="journal article" date="2014" name="Front. Plant Sci.">
        <title>The evolution of the actin binding NET superfamily.</title>
        <authorList>
            <person name="Hawkins T.J."/>
            <person name="Deeks M.J."/>
            <person name="Wang P."/>
            <person name="Hussey P.J."/>
        </authorList>
    </citation>
    <scope>GENE FAMILY</scope>
</reference>
<comment type="function">
    <text evidence="6">Plant-specific actin binding protein. May be part of a membrane-cytoskeletal adapter complex.</text>
</comment>
<comment type="similarity">
    <text evidence="5">Belongs to the NET family.</text>
</comment>
<comment type="sequence caution" evidence="5">
    <conflict type="erroneous gene model prediction">
        <sequence resource="EMBL-CDS" id="AAD25801"/>
    </conflict>
</comment>
<sequence length="1733" mass="198550">MTAVVNGNSKRYSWWWDSHISPKNSKWLQENLTDMDSKVKQMIKVIEEDADSFARRAEMYYKKRPELMKLVEEFYRAYRALAERYDHATGVIRHAQQTMAEAFPNQDPMMFGEESPLGSSTDGFDPQTPDSYPPIRAPVYPDDLRKGAFGISSSHLSTVKRNIAFMEDPQSVSSGKGFKTAKARKGLNFNNVDGKEINAKVLSESERASKAEAEIVALKDALSKVQAEKEASLAQFDQNLEKLSNLESEVSRAQEDSRVLIERATRAEAEVETLRESLSKVEVEKESSLLQYQQCLQNIADLEDRISLAQKEAGEVDERANRAEAETLALKQSLVSSETDKEAALVQYQQCLKTISNLEERLHKAEEDSRLTNQRAENAEGEVESLKQKVSKLIEENEAYELQYQQCLDTIADLKLKLFHAQEETQRLSREIEDGVAKLKFAEEKCVVLERSNQNLHSELDGLLEKLGNQSHELTEKQKELGRLWTCVQEENLRFMEAETAFQTLQQLHSQSQEELSTLALELQNRSQILKDMEARNNGLQEEVQEAKDQSKSLNELNLSSAASIKSLQEEVSKLRETIQKLEAEVELRVDQRNALQQEIYCLKEELSQIGKKHQSMVEQVELVGLHPESFGSSVKELQEENSKLKEIRERESIEKTALIEKLEMMEKLVQKNLLLENSISDLNAELETIRGKLKTLEEASMSLAEEKSGLHSEKDMLISRLQSATENSKKLSEENMVLENSLFNANVELEELKSKLKSLEESCHLLNDDKTTLTSERESLLSHIDTMRKRIEDLEKEHAELKVKVLELATERESSLQKIEELGVSLNAKDCEYASFVQFSESRMNGMESTIHHLQDENQCRVREYQVELDRAHDAHIEIIVLQKCLQDWLEKSSSLIAENQDIKEASKLLEKLVSELEEENIGKQVQIDSSINCIKILRTGIYQVLMKLEIIPGIGSGDENSRDQRNMHDILNRLEDMQTMLLSIRDENQHSAIENLVLIEFLRQLKSEAVGIETEKKILEEELESQCQQLSFSRDETQKLIFVNGELTTKVNQGVNREKVLMVEIEDFHRQVLQLRDDYTILQGDNNKTLDEKAYLTKSTLQLEEEKCKLEDDISLLLSETIYQSNLIILLEDVILEKLSGAMKLNEDLDRLSIVKCKLEEEVRELGDKLKSADIANFQLQVVLEKSNAELLSARSANVHLEHEIANVKVQKEKELLEAMLMISIMQNEKSELSKAVEGLECRYKEAKAIEEDRDKQVLRLRGDYDEQVKKNSHSNEANLKLEADLMNLLMELEEIKVEKENLNQELFTERNEIELWESQSATLFGELQISAVHETLLEGLTNELVEACKNLESRSTLKDREIEQLKGRVNNLEDANKGQNDLMCKYAQAIFLLKESIQSLEKHAMLHEFENGPATETASLVDNSDGFLEIQELHLRIKAIEEAITKKLAMEELKTSSARRSRRRNGSLRKQNHEIYSEETEMITKDIVLDQVSDCSSYGISTRDILKIEDDHSLEAKSQNPPKGKSLSEESLVVDKLEISDRFTDPNKDANKRKVLERLNSDLQKLSNLHVAVEDLKIKVETEEKDEKGKENEYETIKGQINEAEEALEKLLSINRKLVTKVQNGFERSDGSKSSMDLDENESSRRRRISEQARRGSEKIGRLQLEIQRLQFLLLKLEGDREDRAKAKISDSKTRILLRDYIYSGVRGERRKRIKKRFAFCGCVQPPPSP</sequence>
<keyword id="KW-0175">Coiled coil</keyword>
<keyword id="KW-1185">Reference proteome</keyword>
<organism evidence="9">
    <name type="scientific">Arabidopsis thaliana</name>
    <name type="common">Mouse-ear cress</name>
    <dbReference type="NCBI Taxonomy" id="3702"/>
    <lineage>
        <taxon>Eukaryota</taxon>
        <taxon>Viridiplantae</taxon>
        <taxon>Streptophyta</taxon>
        <taxon>Embryophyta</taxon>
        <taxon>Tracheophyta</taxon>
        <taxon>Spermatophyta</taxon>
        <taxon>Magnoliopsida</taxon>
        <taxon>eudicotyledons</taxon>
        <taxon>Gunneridae</taxon>
        <taxon>Pentapetalae</taxon>
        <taxon>rosids</taxon>
        <taxon>malvids</taxon>
        <taxon>Brassicales</taxon>
        <taxon>Brassicaceae</taxon>
        <taxon>Camelineae</taxon>
        <taxon>Arabidopsis</taxon>
    </lineage>
</organism>
<accession>F4HZB5</accession>
<accession>Q9SA62</accession>
<name>NET1D_ARATH</name>
<proteinExistence type="inferred from homology"/>
<dbReference type="EMBL" id="AC006550">
    <property type="protein sequence ID" value="AAD25801.1"/>
    <property type="status" value="ALT_SEQ"/>
    <property type="molecule type" value="Genomic_DNA"/>
</dbReference>
<dbReference type="EMBL" id="CP002684">
    <property type="protein sequence ID" value="AEE27526.1"/>
    <property type="molecule type" value="Genomic_DNA"/>
</dbReference>
<dbReference type="EMBL" id="CP002684">
    <property type="protein sequence ID" value="ANM59941.1"/>
    <property type="molecule type" value="Genomic_DNA"/>
</dbReference>
<dbReference type="EMBL" id="CP002684">
    <property type="protein sequence ID" value="ANM59942.1"/>
    <property type="molecule type" value="Genomic_DNA"/>
</dbReference>
<dbReference type="PIR" id="F86161">
    <property type="entry name" value="F86161"/>
</dbReference>
<dbReference type="RefSeq" id="NP_001322258.1">
    <property type="nucleotide sequence ID" value="NM_001331386.1"/>
</dbReference>
<dbReference type="RefSeq" id="NP_001322259.1">
    <property type="nucleotide sequence ID" value="NM_001331385.1"/>
</dbReference>
<dbReference type="RefSeq" id="NP_171807.2">
    <property type="nucleotide sequence ID" value="NM_100190.4"/>
</dbReference>
<dbReference type="SMR" id="F4HZB5"/>
<dbReference type="FunCoup" id="F4HZB5">
    <property type="interactions" value="1488"/>
</dbReference>
<dbReference type="STRING" id="3702.F4HZB5"/>
<dbReference type="iPTMnet" id="F4HZB5"/>
<dbReference type="PaxDb" id="3702-AT1G03080.1"/>
<dbReference type="ProteomicsDB" id="249043"/>
<dbReference type="EnsemblPlants" id="AT1G03080.1">
    <property type="protein sequence ID" value="AT1G03080.1"/>
    <property type="gene ID" value="AT1G03080"/>
</dbReference>
<dbReference type="EnsemblPlants" id="AT1G03080.2">
    <property type="protein sequence ID" value="AT1G03080.2"/>
    <property type="gene ID" value="AT1G03080"/>
</dbReference>
<dbReference type="EnsemblPlants" id="AT1G03080.3">
    <property type="protein sequence ID" value="AT1G03080.3"/>
    <property type="gene ID" value="AT1G03080"/>
</dbReference>
<dbReference type="GeneID" id="838350"/>
<dbReference type="Gramene" id="AT1G03080.1">
    <property type="protein sequence ID" value="AT1G03080.1"/>
    <property type="gene ID" value="AT1G03080"/>
</dbReference>
<dbReference type="Gramene" id="AT1G03080.2">
    <property type="protein sequence ID" value="AT1G03080.2"/>
    <property type="gene ID" value="AT1G03080"/>
</dbReference>
<dbReference type="Gramene" id="AT1G03080.3">
    <property type="protein sequence ID" value="AT1G03080.3"/>
    <property type="gene ID" value="AT1G03080"/>
</dbReference>
<dbReference type="KEGG" id="ath:AT1G03080"/>
<dbReference type="Araport" id="AT1G03080"/>
<dbReference type="TAIR" id="AT1G03080">
    <property type="gene designation" value="NET1D"/>
</dbReference>
<dbReference type="eggNOG" id="ENOG502QQ6M">
    <property type="taxonomic scope" value="Eukaryota"/>
</dbReference>
<dbReference type="HOGENOM" id="CLU_001229_1_1_1"/>
<dbReference type="InParanoid" id="F4HZB5"/>
<dbReference type="OMA" id="KHEAMME"/>
<dbReference type="PRO" id="PR:F4HZB5"/>
<dbReference type="Proteomes" id="UP000006548">
    <property type="component" value="Chromosome 1"/>
</dbReference>
<dbReference type="ExpressionAtlas" id="F4HZB5">
    <property type="expression patterns" value="baseline and differential"/>
</dbReference>
<dbReference type="GO" id="GO:0016020">
    <property type="term" value="C:membrane"/>
    <property type="evidence" value="ECO:0007669"/>
    <property type="project" value="UniProtKB-ARBA"/>
</dbReference>
<dbReference type="GO" id="GO:0003779">
    <property type="term" value="F:actin binding"/>
    <property type="evidence" value="ECO:0007669"/>
    <property type="project" value="InterPro"/>
</dbReference>
<dbReference type="Gene3D" id="1.10.287.1490">
    <property type="match status" value="1"/>
</dbReference>
<dbReference type="InterPro" id="IPR011684">
    <property type="entry name" value="NAB"/>
</dbReference>
<dbReference type="InterPro" id="IPR051861">
    <property type="entry name" value="NET_actin-binding_domain"/>
</dbReference>
<dbReference type="PANTHER" id="PTHR32258:SF32">
    <property type="entry name" value="PROTEIN NETWORKED 1D"/>
    <property type="match status" value="1"/>
</dbReference>
<dbReference type="PANTHER" id="PTHR32258">
    <property type="entry name" value="PROTEIN NETWORKED 4A"/>
    <property type="match status" value="1"/>
</dbReference>
<dbReference type="Pfam" id="PF07765">
    <property type="entry name" value="KIP1"/>
    <property type="match status" value="1"/>
</dbReference>
<dbReference type="SUPFAM" id="SSF57997">
    <property type="entry name" value="Tropomyosin"/>
    <property type="match status" value="2"/>
</dbReference>
<dbReference type="PROSITE" id="PS51774">
    <property type="entry name" value="NAB"/>
    <property type="match status" value="1"/>
</dbReference>
<gene>
    <name evidence="4" type="primary">NET1D</name>
    <name evidence="7" type="ordered locus">At1g03080</name>
    <name evidence="8" type="ORF">F10O3.10</name>
</gene>
<feature type="chain" id="PRO_0000431852" description="Protein NETWORKED 1D">
    <location>
        <begin position="1"/>
        <end position="1733"/>
    </location>
</feature>
<feature type="domain" description="NAB" evidence="2">
    <location>
        <begin position="12"/>
        <end position="92"/>
    </location>
</feature>
<feature type="region of interest" description="Disordered" evidence="3">
    <location>
        <begin position="1456"/>
        <end position="1476"/>
    </location>
</feature>
<feature type="region of interest" description="Disordered" evidence="3">
    <location>
        <begin position="1628"/>
        <end position="1656"/>
    </location>
</feature>
<feature type="coiled-coil region" evidence="1">
    <location>
        <begin position="195"/>
        <end position="816"/>
    </location>
</feature>
<feature type="coiled-coil region" evidence="1">
    <location>
        <begin position="897"/>
        <end position="931"/>
    </location>
</feature>
<feature type="coiled-coil region" evidence="1">
    <location>
        <begin position="960"/>
        <end position="1043"/>
    </location>
</feature>
<feature type="coiled-coil region" evidence="1">
    <location>
        <begin position="1196"/>
        <end position="1386"/>
    </location>
</feature>
<feature type="coiled-coil region" evidence="1">
    <location>
        <begin position="1553"/>
        <end position="1627"/>
    </location>
</feature>
<feature type="coiled-coil region" evidence="1">
    <location>
        <begin position="1653"/>
        <end position="1686"/>
    </location>
</feature>
<feature type="compositionally biased region" description="Basic residues" evidence="3">
    <location>
        <begin position="1460"/>
        <end position="1470"/>
    </location>
</feature>
<evidence type="ECO:0000255" key="1"/>
<evidence type="ECO:0000255" key="2">
    <source>
        <dbReference type="PROSITE-ProRule" id="PRU01110"/>
    </source>
</evidence>
<evidence type="ECO:0000256" key="3">
    <source>
        <dbReference type="SAM" id="MobiDB-lite"/>
    </source>
</evidence>
<evidence type="ECO:0000303" key="4">
    <source>
    </source>
</evidence>
<evidence type="ECO:0000305" key="5"/>
<evidence type="ECO:0000305" key="6">
    <source>
    </source>
</evidence>
<evidence type="ECO:0000312" key="7">
    <source>
        <dbReference type="Araport" id="AT1G03080"/>
    </source>
</evidence>
<evidence type="ECO:0000312" key="8">
    <source>
        <dbReference type="EMBL" id="AAD25801.1"/>
    </source>
</evidence>
<evidence type="ECO:0000312" key="9">
    <source>
        <dbReference type="Proteomes" id="UP000006548"/>
    </source>
</evidence>
<protein>
    <recommendedName>
        <fullName evidence="4">Protein NETWORKED 1D</fullName>
    </recommendedName>
</protein>